<proteinExistence type="evidence at protein level"/>
<feature type="chain" id="PRO_0000251119" description="Uncharacterized protein L454">
    <location>
        <begin position="1"/>
        <end position="1257"/>
    </location>
</feature>
<feature type="region of interest" description="Disordered" evidence="1">
    <location>
        <begin position="1"/>
        <end position="26"/>
    </location>
</feature>
<feature type="compositionally biased region" description="Basic residues" evidence="1">
    <location>
        <begin position="8"/>
        <end position="22"/>
    </location>
</feature>
<organism>
    <name type="scientific">Acanthamoeba polyphaga mimivirus</name>
    <name type="common">APMV</name>
    <dbReference type="NCBI Taxonomy" id="212035"/>
    <lineage>
        <taxon>Viruses</taxon>
        <taxon>Varidnaviria</taxon>
        <taxon>Bamfordvirae</taxon>
        <taxon>Nucleocytoviricota</taxon>
        <taxon>Megaviricetes</taxon>
        <taxon>Imitervirales</taxon>
        <taxon>Mimiviridae</taxon>
        <taxon>Megamimivirinae</taxon>
        <taxon>Mimivirus</taxon>
        <taxon>Mimivirus bradfordmassiliense</taxon>
    </lineage>
</organism>
<organismHost>
    <name type="scientific">Acanthamoeba polyphaga</name>
    <name type="common">Amoeba</name>
    <dbReference type="NCBI Taxonomy" id="5757"/>
</organismHost>
<keyword id="KW-1185">Reference proteome</keyword>
<keyword id="KW-0946">Virion</keyword>
<gene>
    <name type="ordered locus">MIMI_L454</name>
</gene>
<name>YL454_MIMIV</name>
<protein>
    <recommendedName>
        <fullName>Uncharacterized protein L454</fullName>
    </recommendedName>
</protein>
<accession>Q5UQP8</accession>
<evidence type="ECO:0000256" key="1">
    <source>
        <dbReference type="SAM" id="MobiDB-lite"/>
    </source>
</evidence>
<evidence type="ECO:0000269" key="2">
    <source>
    </source>
</evidence>
<reference key="1">
    <citation type="journal article" date="2004" name="Science">
        <title>The 1.2-megabase genome sequence of Mimivirus.</title>
        <authorList>
            <person name="Raoult D."/>
            <person name="Audic S."/>
            <person name="Robert C."/>
            <person name="Abergel C."/>
            <person name="Renesto P."/>
            <person name="Ogata H."/>
            <person name="La Scola B."/>
            <person name="Susan M."/>
            <person name="Claverie J.-M."/>
        </authorList>
    </citation>
    <scope>NUCLEOTIDE SEQUENCE [LARGE SCALE GENOMIC DNA]</scope>
    <source>
        <strain>Rowbotham-Bradford</strain>
    </source>
</reference>
<reference key="2">
    <citation type="journal article" date="2006" name="J. Virol.">
        <title>Mimivirus giant particles incorporate a large fraction of anonymous and unique gene products.</title>
        <authorList>
            <person name="Renesto P."/>
            <person name="Abergel C."/>
            <person name="Decloquement P."/>
            <person name="Moinier D."/>
            <person name="Azza S."/>
            <person name="Ogata H."/>
            <person name="Fourquet P."/>
            <person name="Gorvel J.-P."/>
            <person name="Claverie J.-M."/>
            <person name="Raoult D."/>
        </authorList>
    </citation>
    <scope>IDENTIFICATION BY MASS SPECTROMETRY [LARGE SCALE ANALYSIS]</scope>
    <scope>SUBCELLULAR LOCATION</scope>
</reference>
<dbReference type="EMBL" id="AY653733">
    <property type="protein sequence ID" value="AAV50720.1"/>
    <property type="molecule type" value="Genomic_DNA"/>
</dbReference>
<dbReference type="KEGG" id="vg:9925079"/>
<dbReference type="Proteomes" id="UP000001134">
    <property type="component" value="Genome"/>
</dbReference>
<dbReference type="GO" id="GO:0044423">
    <property type="term" value="C:virion component"/>
    <property type="evidence" value="ECO:0007669"/>
    <property type="project" value="UniProtKB-KW"/>
</dbReference>
<comment type="subcellular location">
    <subcellularLocation>
        <location evidence="2">Virion</location>
    </subcellularLocation>
</comment>
<sequence>MNFSNKPNKSRKKSNRKNKKSNKSNTQKFFNENIVVDCDLFGVSENITNNAKSMNQVFDNESGISKRVQKPSVKNINKKNLKSKQKNRPAYWAQFDAQRFDSIGDPSAPNELYQSCDKSKLADLERQLSYQGGWTQFNSDSSMSYGIVSDDKLTHNNMMPYFSAKSGYGSNDLLNTSVMNYKNSLFTGNLKDTWKHKQEIKPHFKPVADSSYIHGTPIYSDDVRQRYESQASKLRQGEKLFDSIQVTPGLNLRHDEKGTHGYHSMYRPLEKTVDELRVRPKITYEGRIIEGMRGQERAAQAPVITYKPDTYKTTTKDDLLPTSDIKKAPKVIDNFIMKDTARHDQHIEYTGGAYTGSNHVGRNVPEYMQEKYKESTRQNFLAPKPMQKHSKTDTKFNPNLKSYELPFTLKDQNIHNKHPGITSSIFGNTTYSNLTDSAKFTNKQLIAEKSVTNTNIGTNNMRGTVHCMDIANPTIKEISVENRLNPNINGFSTIHRTYNPEIAKATIKETVIDNLEPSNVGQNIGSYANLTHNLNETIKETTVEIPQNNFVVPVGQYQRTPGLQDTTNPTIRETTVGINRNSNILPIGQYQRAPDMQDIARTTMNETIITTPWNNHITPINQQQSAPHPQDLFRSTLKETTIDLNRNSNILPIGQYQRAPNLQDNFRTSTRETTIEIPRHSQIIPTGQYQRAPNLQDNTNPTIRETTVGISRNSQIIPINQYQRAPNLQDNLKTSLKEITNSISRNSQVLPVGQYQRTPNLQDLPNTNLKEITNSMTRNTQINPVGQYQRAPDLQDITNPTLREITGNIHRNSFVVPVNQQQRAPDLQDIMNPTLRETTVGIHRNNIIIPVSQQQGPTNLQNNNNTTLKEISMSKHRNSIITPINQHQRAPNNQDIARSTLKETSIGIHRNTNIVPIGQQQRTPNPQDILNPTLRETIKIPYNTNINAVGQQQGRTNLTDSARSTIKETVVSIPQNYVTTAVGQQQGKTIQDSLRQTLKELNLENNHNSNIGTRENNLGAAHSFNRQPLRSTTKESIVDVPQNTHMTAVGQLKHKAPLLDTVRTTMKENIIQIPYNSVVTAVNQSQGSSSSFNREPLNTTIKEMVTDNKHIGQANHDGYGRGYGYLTEKKEAPNTNKQFTCQEVYIAPLEGHQKPKSYEAAYNAETNERKEALFKYRSPTDSGVNMGPDPDMINLKLRNDNHESRDPNTGYSFNNSLDRFNPQISSKISNSIDSCRNIDPMLVGQLDSNPFNIKYNI</sequence>